<evidence type="ECO:0000255" key="1"/>
<evidence type="ECO:0000269" key="2">
    <source>
    </source>
</evidence>
<evidence type="ECO:0000303" key="3">
    <source>
    </source>
</evidence>
<evidence type="ECO:0000305" key="4">
    <source>
    </source>
</evidence>
<proteinExistence type="evidence at protein level"/>
<reference key="1">
    <citation type="journal article" date="1997" name="Microbiology">
        <title>A 12-cistron Escherichia coli operon (hyf) encoding a putative proton-translocating formate hydrogenlyase system.</title>
        <authorList>
            <person name="Andrews S.C."/>
            <person name="Berks B.C."/>
            <person name="McClay J."/>
            <person name="Ambler A."/>
            <person name="Quail M.A."/>
            <person name="Golby P."/>
            <person name="Guest J.R."/>
        </authorList>
    </citation>
    <scope>NUCLEOTIDE SEQUENCE [GENOMIC DNA]</scope>
    <scope>POSSIBLE FUNCTION</scope>
    <source>
        <strain>K12</strain>
    </source>
</reference>
<reference key="2">
    <citation type="journal article" date="1997" name="DNA Res.">
        <title>Construction of a contiguous 874-kb sequence of the Escherichia coli-K12 genome corresponding to 50.0-68.8 min on the linkage map and analysis of its sequence features.</title>
        <authorList>
            <person name="Yamamoto Y."/>
            <person name="Aiba H."/>
            <person name="Baba T."/>
            <person name="Hayashi K."/>
            <person name="Inada T."/>
            <person name="Isono K."/>
            <person name="Itoh T."/>
            <person name="Kimura S."/>
            <person name="Kitagawa M."/>
            <person name="Makino K."/>
            <person name="Miki T."/>
            <person name="Mitsuhashi N."/>
            <person name="Mizobuchi K."/>
            <person name="Mori H."/>
            <person name="Nakade S."/>
            <person name="Nakamura Y."/>
            <person name="Nashimoto H."/>
            <person name="Oshima T."/>
            <person name="Oyama S."/>
            <person name="Saito N."/>
            <person name="Sampei G."/>
            <person name="Satoh Y."/>
            <person name="Sivasundaram S."/>
            <person name="Tagami H."/>
            <person name="Takahashi H."/>
            <person name="Takeda J."/>
            <person name="Takemoto K."/>
            <person name="Uehara K."/>
            <person name="Wada C."/>
            <person name="Yamagata S."/>
            <person name="Horiuchi T."/>
        </authorList>
    </citation>
    <scope>NUCLEOTIDE SEQUENCE [LARGE SCALE GENOMIC DNA]</scope>
    <source>
        <strain>K12 / W3110 / ATCC 27325 / DSM 5911</strain>
    </source>
</reference>
<reference key="3">
    <citation type="journal article" date="1997" name="Science">
        <title>The complete genome sequence of Escherichia coli K-12.</title>
        <authorList>
            <person name="Blattner F.R."/>
            <person name="Plunkett G. III"/>
            <person name="Bloch C.A."/>
            <person name="Perna N.T."/>
            <person name="Burland V."/>
            <person name="Riley M."/>
            <person name="Collado-Vides J."/>
            <person name="Glasner J.D."/>
            <person name="Rode C.K."/>
            <person name="Mayhew G.F."/>
            <person name="Gregor J."/>
            <person name="Davis N.W."/>
            <person name="Kirkpatrick H.A."/>
            <person name="Goeden M.A."/>
            <person name="Rose D.J."/>
            <person name="Mau B."/>
            <person name="Shao Y."/>
        </authorList>
    </citation>
    <scope>NUCLEOTIDE SEQUENCE [LARGE SCALE GENOMIC DNA]</scope>
    <source>
        <strain>K12 / MG1655 / ATCC 47076</strain>
    </source>
</reference>
<reference key="4">
    <citation type="journal article" date="2006" name="Mol. Syst. Biol.">
        <title>Highly accurate genome sequences of Escherichia coli K-12 strains MG1655 and W3110.</title>
        <authorList>
            <person name="Hayashi K."/>
            <person name="Morooka N."/>
            <person name="Yamamoto Y."/>
            <person name="Fujita K."/>
            <person name="Isono K."/>
            <person name="Choi S."/>
            <person name="Ohtsubo E."/>
            <person name="Baba T."/>
            <person name="Wanner B.L."/>
            <person name="Mori H."/>
            <person name="Horiuchi T."/>
        </authorList>
    </citation>
    <scope>NUCLEOTIDE SEQUENCE [LARGE SCALE GENOMIC DNA]</scope>
    <source>
        <strain>K12 / W3110 / ATCC 27325 / DSM 5911</strain>
    </source>
</reference>
<reference key="5">
    <citation type="journal article" date="2005" name="Science">
        <title>Global topology analysis of the Escherichia coli inner membrane proteome.</title>
        <authorList>
            <person name="Daley D.O."/>
            <person name="Rapp M."/>
            <person name="Granseth E."/>
            <person name="Melen K."/>
            <person name="Drew D."/>
            <person name="von Heijne G."/>
        </authorList>
    </citation>
    <scope>SUBCELLULAR LOCATION</scope>
    <scope>TOPOLOGY [LARGE SCALE ANALYSIS]</scope>
    <source>
        <strain>K12 / MG1655 / ATCC 47076</strain>
    </source>
</reference>
<keyword id="KW-0997">Cell inner membrane</keyword>
<keyword id="KW-1003">Cell membrane</keyword>
<keyword id="KW-0472">Membrane</keyword>
<keyword id="KW-0560">Oxidoreductase</keyword>
<keyword id="KW-1185">Reference proteome</keyword>
<keyword id="KW-0812">Transmembrane</keyword>
<keyword id="KW-1133">Transmembrane helix</keyword>
<comment type="function">
    <text evidence="4">Possible component of hydrogenase 4.</text>
</comment>
<comment type="subcellular location">
    <subcellularLocation>
        <location evidence="2">Cell inner membrane</location>
        <topology>Multi-pass membrane protein</topology>
    </subcellularLocation>
</comment>
<name>HYFE_ECOLI</name>
<dbReference type="EC" id="1.-.-.-"/>
<dbReference type="EMBL" id="M63654">
    <property type="protein sequence ID" value="AAB88567.1"/>
    <property type="molecule type" value="Genomic_DNA"/>
</dbReference>
<dbReference type="EMBL" id="U00096">
    <property type="protein sequence ID" value="AAC75538.1"/>
    <property type="molecule type" value="Genomic_DNA"/>
</dbReference>
<dbReference type="EMBL" id="AP009048">
    <property type="protein sequence ID" value="BAA16373.1"/>
    <property type="molecule type" value="Genomic_DNA"/>
</dbReference>
<dbReference type="PIR" id="D65024">
    <property type="entry name" value="D65024"/>
</dbReference>
<dbReference type="RefSeq" id="NP_416980.1">
    <property type="nucleotide sequence ID" value="NC_000913.3"/>
</dbReference>
<dbReference type="RefSeq" id="WP_000147987.1">
    <property type="nucleotide sequence ID" value="NZ_LN832404.1"/>
</dbReference>
<dbReference type="SMR" id="P0AEW1"/>
<dbReference type="BioGRID" id="4263214">
    <property type="interactions" value="173"/>
</dbReference>
<dbReference type="ComplexPortal" id="CPX-6028">
    <property type="entry name" value="Formate hydrogenlyase-H/Hydrogenase-4 complex"/>
</dbReference>
<dbReference type="DIP" id="DIP-48020N"/>
<dbReference type="FunCoup" id="P0AEW1">
    <property type="interactions" value="136"/>
</dbReference>
<dbReference type="IntAct" id="P0AEW1">
    <property type="interactions" value="2"/>
</dbReference>
<dbReference type="STRING" id="511145.b2485"/>
<dbReference type="TCDB" id="3.D.1.9.1">
    <property type="family name" value="the h+ or na+-translocating nadh dehydrogenase (ndh) family"/>
</dbReference>
<dbReference type="PaxDb" id="511145-b2485"/>
<dbReference type="EnsemblBacteria" id="AAC75538">
    <property type="protein sequence ID" value="AAC75538"/>
    <property type="gene ID" value="b2485"/>
</dbReference>
<dbReference type="GeneID" id="93774653"/>
<dbReference type="GeneID" id="945298"/>
<dbReference type="KEGG" id="ecj:JW2470"/>
<dbReference type="KEGG" id="eco:b2485"/>
<dbReference type="KEGG" id="ecoc:C3026_13790"/>
<dbReference type="PATRIC" id="fig|1411691.4.peg.4254"/>
<dbReference type="EchoBASE" id="EB3965"/>
<dbReference type="eggNOG" id="COG4237">
    <property type="taxonomic scope" value="Bacteria"/>
</dbReference>
<dbReference type="HOGENOM" id="CLU_088957_2_0_6"/>
<dbReference type="InParanoid" id="P0AEW1"/>
<dbReference type="OMA" id="GMPMVVE"/>
<dbReference type="OrthoDB" id="8587617at2"/>
<dbReference type="PhylomeDB" id="P0AEW1"/>
<dbReference type="BioCyc" id="EcoCyc:MONOMER0-142"/>
<dbReference type="PRO" id="PR:P0AEW1"/>
<dbReference type="Proteomes" id="UP000000625">
    <property type="component" value="Chromosome"/>
</dbReference>
<dbReference type="GO" id="GO:0009326">
    <property type="term" value="C:formate dehydrogenase complex"/>
    <property type="evidence" value="ECO:0000303"/>
    <property type="project" value="ComplexPortal"/>
</dbReference>
<dbReference type="GO" id="GO:0016020">
    <property type="term" value="C:membrane"/>
    <property type="evidence" value="ECO:0000303"/>
    <property type="project" value="ComplexPortal"/>
</dbReference>
<dbReference type="GO" id="GO:0005886">
    <property type="term" value="C:plasma membrane"/>
    <property type="evidence" value="ECO:0000255"/>
    <property type="project" value="EcoCyc"/>
</dbReference>
<dbReference type="GO" id="GO:0016491">
    <property type="term" value="F:oxidoreductase activity"/>
    <property type="evidence" value="ECO:0007669"/>
    <property type="project" value="UniProtKB-KW"/>
</dbReference>
<dbReference type="GO" id="GO:0019645">
    <property type="term" value="P:anaerobic electron transport chain"/>
    <property type="evidence" value="ECO:0000303"/>
    <property type="project" value="ComplexPortal"/>
</dbReference>
<dbReference type="GO" id="GO:0009061">
    <property type="term" value="P:anaerobic respiration"/>
    <property type="evidence" value="ECO:0000303"/>
    <property type="project" value="ComplexPortal"/>
</dbReference>
<dbReference type="GO" id="GO:0015944">
    <property type="term" value="P:formate oxidation"/>
    <property type="evidence" value="ECO:0000303"/>
    <property type="project" value="ComplexPortal"/>
</dbReference>
<dbReference type="GO" id="GO:0006007">
    <property type="term" value="P:glucose catabolic process"/>
    <property type="evidence" value="ECO:0000303"/>
    <property type="project" value="ComplexPortal"/>
</dbReference>
<dbReference type="FunFam" id="1.10.287.3510:FF:000005">
    <property type="entry name" value="Hydrogenase 4, membrane subunit"/>
    <property type="match status" value="1"/>
</dbReference>
<dbReference type="Gene3D" id="1.10.287.3510">
    <property type="match status" value="1"/>
</dbReference>
<dbReference type="InterPro" id="IPR038730">
    <property type="entry name" value="HyfE-like"/>
</dbReference>
<dbReference type="InterPro" id="IPR039428">
    <property type="entry name" value="NUOK/Mnh_C1-like"/>
</dbReference>
<dbReference type="NCBIfam" id="NF008556">
    <property type="entry name" value="PRK11492.1"/>
    <property type="match status" value="1"/>
</dbReference>
<dbReference type="PANTHER" id="PTHR38601">
    <property type="entry name" value="HYDROGENASE-4 COMPONENT E"/>
    <property type="match status" value="1"/>
</dbReference>
<dbReference type="PANTHER" id="PTHR38601:SF1">
    <property type="entry name" value="HYDROGENASE-4 COMPONENT E"/>
    <property type="match status" value="1"/>
</dbReference>
<dbReference type="Pfam" id="PF00420">
    <property type="entry name" value="Oxidored_q2"/>
    <property type="match status" value="1"/>
</dbReference>
<feature type="chain" id="PRO_0000084115" description="Hydrogenase-4 component E">
    <location>
        <begin position="1"/>
        <end position="216"/>
    </location>
</feature>
<feature type="topological domain" description="Periplasmic" evidence="1">
    <location>
        <begin position="1"/>
        <end position="3"/>
    </location>
</feature>
<feature type="transmembrane region" description="Helical" evidence="1">
    <location>
        <begin position="4"/>
        <end position="24"/>
    </location>
</feature>
<feature type="topological domain" description="Cytoplasmic" evidence="1">
    <location>
        <begin position="25"/>
        <end position="38"/>
    </location>
</feature>
<feature type="transmembrane region" description="Helical" evidence="1">
    <location>
        <begin position="39"/>
        <end position="59"/>
    </location>
</feature>
<feature type="transmembrane region" description="Helical" evidence="1">
    <location>
        <begin position="60"/>
        <end position="80"/>
    </location>
</feature>
<feature type="topological domain" description="Cytoplasmic" evidence="1">
    <location>
        <begin position="81"/>
        <end position="92"/>
    </location>
</feature>
<feature type="transmembrane region" description="Helical" evidence="1">
    <location>
        <begin position="93"/>
        <end position="113"/>
    </location>
</feature>
<feature type="topological domain" description="Periplasmic" evidence="1">
    <location>
        <begin position="114"/>
        <end position="122"/>
    </location>
</feature>
<feature type="transmembrane region" description="Helical" evidence="1">
    <location>
        <begin position="123"/>
        <end position="143"/>
    </location>
</feature>
<feature type="topological domain" description="Cytoplasmic" evidence="1">
    <location>
        <begin position="144"/>
        <end position="150"/>
    </location>
</feature>
<feature type="transmembrane region" description="Helical" evidence="1">
    <location>
        <begin position="151"/>
        <end position="171"/>
    </location>
</feature>
<feature type="topological domain" description="Periplasmic" evidence="1">
    <location>
        <begin position="172"/>
        <end position="175"/>
    </location>
</feature>
<feature type="transmembrane region" description="Helical" evidence="1">
    <location>
        <begin position="176"/>
        <end position="196"/>
    </location>
</feature>
<feature type="topological domain" description="Cytoplasmic" evidence="1 2">
    <location>
        <begin position="197"/>
        <end position="216"/>
    </location>
</feature>
<protein>
    <recommendedName>
        <fullName>Hydrogenase-4 component E</fullName>
        <ecNumber>1.-.-.-</ecNumber>
    </recommendedName>
</protein>
<organism>
    <name type="scientific">Escherichia coli (strain K12)</name>
    <dbReference type="NCBI Taxonomy" id="83333"/>
    <lineage>
        <taxon>Bacteria</taxon>
        <taxon>Pseudomonadati</taxon>
        <taxon>Pseudomonadota</taxon>
        <taxon>Gammaproteobacteria</taxon>
        <taxon>Enterobacterales</taxon>
        <taxon>Enterobacteriaceae</taxon>
        <taxon>Escherichia</taxon>
    </lineage>
</organism>
<sequence>MTGSMIVNNLAGLMMLTSLFVISVKSYRLSCGFYACQSLVLVSIFATLSCLFAAEQLLIWSASAFITKVLLVPLIMTYAARNIPQNIPEKALFGPAMMALLAALIVLLCAFVVQPVKLPMATGLKPALAVALGHFLLGLLCIVSQRNILRQIFGYCLMENGSHLVLALLAWRAPELVEIGIATDAIFAVIVMVLLARKIWRTHGTLDVNNLTALKG</sequence>
<accession>P0AEW1</accession>
<accession>P77524</accession>
<gene>
    <name evidence="3" type="primary">hyfE</name>
    <name type="ordered locus">b2485</name>
    <name type="ordered locus">JW2470</name>
</gene>